<organism>
    <name type="scientific">Bifidobacterium adolescentis (strain ATCC 15703 / DSM 20083 / NCTC 11814 / E194a)</name>
    <dbReference type="NCBI Taxonomy" id="367928"/>
    <lineage>
        <taxon>Bacteria</taxon>
        <taxon>Bacillati</taxon>
        <taxon>Actinomycetota</taxon>
        <taxon>Actinomycetes</taxon>
        <taxon>Bifidobacteriales</taxon>
        <taxon>Bifidobacteriaceae</taxon>
        <taxon>Bifidobacterium</taxon>
    </lineage>
</organism>
<feature type="chain" id="PRO_1000056139" description="Bifunctional protein GlmU">
    <location>
        <begin position="1"/>
        <end position="460"/>
    </location>
</feature>
<feature type="region of interest" description="Pyrophosphorylase" evidence="1">
    <location>
        <begin position="1"/>
        <end position="235"/>
    </location>
</feature>
<feature type="region of interest" description="Linker" evidence="1">
    <location>
        <begin position="236"/>
        <end position="256"/>
    </location>
</feature>
<feature type="region of interest" description="N-acetyltransferase" evidence="1">
    <location>
        <begin position="257"/>
        <end position="460"/>
    </location>
</feature>
<feature type="active site" description="Proton acceptor" evidence="1">
    <location>
        <position position="368"/>
    </location>
</feature>
<feature type="binding site" evidence="1">
    <location>
        <begin position="9"/>
        <end position="12"/>
    </location>
    <ligand>
        <name>UDP-N-acetyl-alpha-D-glucosamine</name>
        <dbReference type="ChEBI" id="CHEBI:57705"/>
    </ligand>
</feature>
<feature type="binding site" evidence="1">
    <location>
        <position position="23"/>
    </location>
    <ligand>
        <name>UDP-N-acetyl-alpha-D-glucosamine</name>
        <dbReference type="ChEBI" id="CHEBI:57705"/>
    </ligand>
</feature>
<feature type="binding site" evidence="1">
    <location>
        <position position="76"/>
    </location>
    <ligand>
        <name>UDP-N-acetyl-alpha-D-glucosamine</name>
        <dbReference type="ChEBI" id="CHEBI:57705"/>
    </ligand>
</feature>
<feature type="binding site" evidence="1">
    <location>
        <begin position="81"/>
        <end position="82"/>
    </location>
    <ligand>
        <name>UDP-N-acetyl-alpha-D-glucosamine</name>
        <dbReference type="ChEBI" id="CHEBI:57705"/>
    </ligand>
</feature>
<feature type="binding site" evidence="1">
    <location>
        <position position="109"/>
    </location>
    <ligand>
        <name>Mg(2+)</name>
        <dbReference type="ChEBI" id="CHEBI:18420"/>
    </ligand>
</feature>
<feature type="binding site" evidence="1">
    <location>
        <position position="146"/>
    </location>
    <ligand>
        <name>UDP-N-acetyl-alpha-D-glucosamine</name>
        <dbReference type="ChEBI" id="CHEBI:57705"/>
    </ligand>
</feature>
<feature type="binding site" evidence="1">
    <location>
        <position position="161"/>
    </location>
    <ligand>
        <name>UDP-N-acetyl-alpha-D-glucosamine</name>
        <dbReference type="ChEBI" id="CHEBI:57705"/>
    </ligand>
</feature>
<feature type="binding site" evidence="1">
    <location>
        <position position="176"/>
    </location>
    <ligand>
        <name>UDP-N-acetyl-alpha-D-glucosamine</name>
        <dbReference type="ChEBI" id="CHEBI:57705"/>
    </ligand>
</feature>
<feature type="binding site" evidence="1">
    <location>
        <position position="233"/>
    </location>
    <ligand>
        <name>Mg(2+)</name>
        <dbReference type="ChEBI" id="CHEBI:18420"/>
    </ligand>
</feature>
<feature type="binding site" evidence="1">
    <location>
        <position position="233"/>
    </location>
    <ligand>
        <name>UDP-N-acetyl-alpha-D-glucosamine</name>
        <dbReference type="ChEBI" id="CHEBI:57705"/>
    </ligand>
</feature>
<feature type="binding site" evidence="1">
    <location>
        <position position="338"/>
    </location>
    <ligand>
        <name>UDP-N-acetyl-alpha-D-glucosamine</name>
        <dbReference type="ChEBI" id="CHEBI:57705"/>
    </ligand>
</feature>
<feature type="binding site" evidence="1">
    <location>
        <position position="356"/>
    </location>
    <ligand>
        <name>UDP-N-acetyl-alpha-D-glucosamine</name>
        <dbReference type="ChEBI" id="CHEBI:57705"/>
    </ligand>
</feature>
<feature type="binding site" evidence="1">
    <location>
        <position position="371"/>
    </location>
    <ligand>
        <name>UDP-N-acetyl-alpha-D-glucosamine</name>
        <dbReference type="ChEBI" id="CHEBI:57705"/>
    </ligand>
</feature>
<feature type="binding site" evidence="1">
    <location>
        <position position="382"/>
    </location>
    <ligand>
        <name>UDP-N-acetyl-alpha-D-glucosamine</name>
        <dbReference type="ChEBI" id="CHEBI:57705"/>
    </ligand>
</feature>
<feature type="binding site" evidence="1">
    <location>
        <begin position="391"/>
        <end position="392"/>
    </location>
    <ligand>
        <name>acetyl-CoA</name>
        <dbReference type="ChEBI" id="CHEBI:57288"/>
    </ligand>
</feature>
<feature type="binding site" evidence="1">
    <location>
        <position position="428"/>
    </location>
    <ligand>
        <name>acetyl-CoA</name>
        <dbReference type="ChEBI" id="CHEBI:57288"/>
    </ligand>
</feature>
<accession>A1A1R9</accession>
<sequence length="460" mass="48981">MALSAAIILAAGEGTRMRSNKPKVLHTLAGKTFLNRVMDSVAALDPDTLAVVVHYQAERVAEAARSYNEHVTIVEQDDIPGTGRAVQCAMAQLTQKDDLDGAVLIAASDMPLLDTDTLDQLLAFHEKSGNGATVLTTILDDPTGYGRIIRDSEGNVLRIVEQKDANSSELAVREVNTSVYVFDAKLLAEAIANLKSNNAQGEFYLTDALEAAKANGAVGAFAAPDPLSVEGVNDRVQLAALAKAHNKRVCEHWMREGVTILDPDTTWIEDDVQIARDAVILPGCFLQGHTVIGEAAEVGPYTTLIGATIDAEAHVERSRVQETHIGRAANIGPWTYLRPGNELGEGSKAGAFVEMKKAHIGNGTKVPHLSYVGDADLGEHTNIGGGTITANYDGVHKHHTTIGSNVHVGAGNLFVAPVTVGDGVTTGAGSVVRHDVPSDSMVYSENTQHVVEGWKPEWER</sequence>
<name>GLMU_BIFAA</name>
<comment type="function">
    <text evidence="1">Catalyzes the last two sequential reactions in the de novo biosynthetic pathway for UDP-N-acetylglucosamine (UDP-GlcNAc). The C-terminal domain catalyzes the transfer of acetyl group from acetyl coenzyme A to glucosamine-1-phosphate (GlcN-1-P) to produce N-acetylglucosamine-1-phosphate (GlcNAc-1-P), which is converted into UDP-GlcNAc by the transfer of uridine 5-monophosphate (from uridine 5-triphosphate), a reaction catalyzed by the N-terminal domain.</text>
</comment>
<comment type="catalytic activity">
    <reaction evidence="1">
        <text>alpha-D-glucosamine 1-phosphate + acetyl-CoA = N-acetyl-alpha-D-glucosamine 1-phosphate + CoA + H(+)</text>
        <dbReference type="Rhea" id="RHEA:13725"/>
        <dbReference type="ChEBI" id="CHEBI:15378"/>
        <dbReference type="ChEBI" id="CHEBI:57287"/>
        <dbReference type="ChEBI" id="CHEBI:57288"/>
        <dbReference type="ChEBI" id="CHEBI:57776"/>
        <dbReference type="ChEBI" id="CHEBI:58516"/>
        <dbReference type="EC" id="2.3.1.157"/>
    </reaction>
</comment>
<comment type="catalytic activity">
    <reaction evidence="1">
        <text>N-acetyl-alpha-D-glucosamine 1-phosphate + UTP + H(+) = UDP-N-acetyl-alpha-D-glucosamine + diphosphate</text>
        <dbReference type="Rhea" id="RHEA:13509"/>
        <dbReference type="ChEBI" id="CHEBI:15378"/>
        <dbReference type="ChEBI" id="CHEBI:33019"/>
        <dbReference type="ChEBI" id="CHEBI:46398"/>
        <dbReference type="ChEBI" id="CHEBI:57705"/>
        <dbReference type="ChEBI" id="CHEBI:57776"/>
        <dbReference type="EC" id="2.7.7.23"/>
    </reaction>
</comment>
<comment type="cofactor">
    <cofactor evidence="1">
        <name>Mg(2+)</name>
        <dbReference type="ChEBI" id="CHEBI:18420"/>
    </cofactor>
    <text evidence="1">Binds 1 Mg(2+) ion per subunit.</text>
</comment>
<comment type="pathway">
    <text evidence="1">Nucleotide-sugar biosynthesis; UDP-N-acetyl-alpha-D-glucosamine biosynthesis; N-acetyl-alpha-D-glucosamine 1-phosphate from alpha-D-glucosamine 6-phosphate (route II): step 2/2.</text>
</comment>
<comment type="pathway">
    <text evidence="1">Nucleotide-sugar biosynthesis; UDP-N-acetyl-alpha-D-glucosamine biosynthesis; UDP-N-acetyl-alpha-D-glucosamine from N-acetyl-alpha-D-glucosamine 1-phosphate: step 1/1.</text>
</comment>
<comment type="pathway">
    <text evidence="1">Bacterial outer membrane biogenesis; LPS lipid A biosynthesis.</text>
</comment>
<comment type="subunit">
    <text evidence="1">Homotrimer.</text>
</comment>
<comment type="subcellular location">
    <subcellularLocation>
        <location evidence="1">Cytoplasm</location>
    </subcellularLocation>
</comment>
<comment type="similarity">
    <text evidence="1">In the N-terminal section; belongs to the N-acetylglucosamine-1-phosphate uridyltransferase family.</text>
</comment>
<comment type="similarity">
    <text evidence="1">In the C-terminal section; belongs to the transferase hexapeptide repeat family.</text>
</comment>
<protein>
    <recommendedName>
        <fullName evidence="1">Bifunctional protein GlmU</fullName>
    </recommendedName>
    <domain>
        <recommendedName>
            <fullName evidence="1">UDP-N-acetylglucosamine pyrophosphorylase</fullName>
            <ecNumber evidence="1">2.7.7.23</ecNumber>
        </recommendedName>
        <alternativeName>
            <fullName evidence="1">N-acetylglucosamine-1-phosphate uridyltransferase</fullName>
        </alternativeName>
    </domain>
    <domain>
        <recommendedName>
            <fullName evidence="1">Glucosamine-1-phosphate N-acetyltransferase</fullName>
            <ecNumber evidence="1">2.3.1.157</ecNumber>
        </recommendedName>
    </domain>
</protein>
<reference key="1">
    <citation type="submission" date="2006-12" db="EMBL/GenBank/DDBJ databases">
        <title>Bifidobacterium adolescentis complete genome sequence.</title>
        <authorList>
            <person name="Suzuki T."/>
            <person name="Tsuda Y."/>
            <person name="Kanou N."/>
            <person name="Inoue T."/>
            <person name="Kumazaki K."/>
            <person name="Nagano S."/>
            <person name="Hirai S."/>
            <person name="Tanaka K."/>
            <person name="Watanabe K."/>
        </authorList>
    </citation>
    <scope>NUCLEOTIDE SEQUENCE [LARGE SCALE GENOMIC DNA]</scope>
    <source>
        <strain>ATCC 15703 / DSM 20083 / NCTC 11814 / E194a</strain>
    </source>
</reference>
<evidence type="ECO:0000255" key="1">
    <source>
        <dbReference type="HAMAP-Rule" id="MF_01631"/>
    </source>
</evidence>
<keyword id="KW-0012">Acyltransferase</keyword>
<keyword id="KW-0133">Cell shape</keyword>
<keyword id="KW-0961">Cell wall biogenesis/degradation</keyword>
<keyword id="KW-0963">Cytoplasm</keyword>
<keyword id="KW-0460">Magnesium</keyword>
<keyword id="KW-0479">Metal-binding</keyword>
<keyword id="KW-0511">Multifunctional enzyme</keyword>
<keyword id="KW-0548">Nucleotidyltransferase</keyword>
<keyword id="KW-0573">Peptidoglycan synthesis</keyword>
<keyword id="KW-1185">Reference proteome</keyword>
<keyword id="KW-0677">Repeat</keyword>
<keyword id="KW-0808">Transferase</keyword>
<dbReference type="EC" id="2.7.7.23" evidence="1"/>
<dbReference type="EC" id="2.3.1.157" evidence="1"/>
<dbReference type="EMBL" id="AP009256">
    <property type="protein sequence ID" value="BAF39652.1"/>
    <property type="molecule type" value="Genomic_DNA"/>
</dbReference>
<dbReference type="RefSeq" id="WP_011743235.1">
    <property type="nucleotide sequence ID" value="NC_008618.1"/>
</dbReference>
<dbReference type="SMR" id="A1A1R9"/>
<dbReference type="STRING" id="367928.BAD_0871"/>
<dbReference type="PaxDb" id="1680-BADO_0926"/>
<dbReference type="GeneID" id="4557001"/>
<dbReference type="KEGG" id="bad:BAD_0871"/>
<dbReference type="HOGENOM" id="CLU_029499_15_2_11"/>
<dbReference type="UniPathway" id="UPA00113">
    <property type="reaction ID" value="UER00532"/>
</dbReference>
<dbReference type="UniPathway" id="UPA00113">
    <property type="reaction ID" value="UER00533"/>
</dbReference>
<dbReference type="UniPathway" id="UPA00973"/>
<dbReference type="Proteomes" id="UP000008702">
    <property type="component" value="Chromosome"/>
</dbReference>
<dbReference type="GO" id="GO:0005737">
    <property type="term" value="C:cytoplasm"/>
    <property type="evidence" value="ECO:0007669"/>
    <property type="project" value="UniProtKB-SubCell"/>
</dbReference>
<dbReference type="GO" id="GO:0016020">
    <property type="term" value="C:membrane"/>
    <property type="evidence" value="ECO:0007669"/>
    <property type="project" value="GOC"/>
</dbReference>
<dbReference type="GO" id="GO:0019134">
    <property type="term" value="F:glucosamine-1-phosphate N-acetyltransferase activity"/>
    <property type="evidence" value="ECO:0007669"/>
    <property type="project" value="UniProtKB-UniRule"/>
</dbReference>
<dbReference type="GO" id="GO:0000287">
    <property type="term" value="F:magnesium ion binding"/>
    <property type="evidence" value="ECO:0007669"/>
    <property type="project" value="UniProtKB-UniRule"/>
</dbReference>
<dbReference type="GO" id="GO:0003977">
    <property type="term" value="F:UDP-N-acetylglucosamine diphosphorylase activity"/>
    <property type="evidence" value="ECO:0007669"/>
    <property type="project" value="UniProtKB-UniRule"/>
</dbReference>
<dbReference type="GO" id="GO:0000902">
    <property type="term" value="P:cell morphogenesis"/>
    <property type="evidence" value="ECO:0007669"/>
    <property type="project" value="UniProtKB-UniRule"/>
</dbReference>
<dbReference type="GO" id="GO:0071555">
    <property type="term" value="P:cell wall organization"/>
    <property type="evidence" value="ECO:0007669"/>
    <property type="project" value="UniProtKB-KW"/>
</dbReference>
<dbReference type="GO" id="GO:0009245">
    <property type="term" value="P:lipid A biosynthetic process"/>
    <property type="evidence" value="ECO:0007669"/>
    <property type="project" value="UniProtKB-UniRule"/>
</dbReference>
<dbReference type="GO" id="GO:0009252">
    <property type="term" value="P:peptidoglycan biosynthetic process"/>
    <property type="evidence" value="ECO:0007669"/>
    <property type="project" value="UniProtKB-UniRule"/>
</dbReference>
<dbReference type="GO" id="GO:0008360">
    <property type="term" value="P:regulation of cell shape"/>
    <property type="evidence" value="ECO:0007669"/>
    <property type="project" value="UniProtKB-KW"/>
</dbReference>
<dbReference type="GO" id="GO:0006048">
    <property type="term" value="P:UDP-N-acetylglucosamine biosynthetic process"/>
    <property type="evidence" value="ECO:0007669"/>
    <property type="project" value="UniProtKB-UniPathway"/>
</dbReference>
<dbReference type="CDD" id="cd02540">
    <property type="entry name" value="GT2_GlmU_N_bac"/>
    <property type="match status" value="1"/>
</dbReference>
<dbReference type="CDD" id="cd03353">
    <property type="entry name" value="LbH_GlmU_C"/>
    <property type="match status" value="1"/>
</dbReference>
<dbReference type="Gene3D" id="2.160.10.10">
    <property type="entry name" value="Hexapeptide repeat proteins"/>
    <property type="match status" value="1"/>
</dbReference>
<dbReference type="Gene3D" id="3.90.550.10">
    <property type="entry name" value="Spore Coat Polysaccharide Biosynthesis Protein SpsA, Chain A"/>
    <property type="match status" value="1"/>
</dbReference>
<dbReference type="HAMAP" id="MF_01631">
    <property type="entry name" value="GlmU"/>
    <property type="match status" value="1"/>
</dbReference>
<dbReference type="InterPro" id="IPR005882">
    <property type="entry name" value="Bifunctional_GlmU"/>
</dbReference>
<dbReference type="InterPro" id="IPR050065">
    <property type="entry name" value="GlmU-like"/>
</dbReference>
<dbReference type="InterPro" id="IPR038009">
    <property type="entry name" value="GlmU_C_LbH"/>
</dbReference>
<dbReference type="InterPro" id="IPR001451">
    <property type="entry name" value="Hexapep"/>
</dbReference>
<dbReference type="InterPro" id="IPR025877">
    <property type="entry name" value="MobA-like_NTP_Trfase"/>
</dbReference>
<dbReference type="InterPro" id="IPR029044">
    <property type="entry name" value="Nucleotide-diphossugar_trans"/>
</dbReference>
<dbReference type="InterPro" id="IPR011004">
    <property type="entry name" value="Trimer_LpxA-like_sf"/>
</dbReference>
<dbReference type="NCBIfam" id="TIGR01173">
    <property type="entry name" value="glmU"/>
    <property type="match status" value="1"/>
</dbReference>
<dbReference type="NCBIfam" id="NF010932">
    <property type="entry name" value="PRK14352.1"/>
    <property type="match status" value="1"/>
</dbReference>
<dbReference type="PANTHER" id="PTHR43584:SF3">
    <property type="entry name" value="BIFUNCTIONAL PROTEIN GLMU"/>
    <property type="match status" value="1"/>
</dbReference>
<dbReference type="PANTHER" id="PTHR43584">
    <property type="entry name" value="NUCLEOTIDYL TRANSFERASE"/>
    <property type="match status" value="1"/>
</dbReference>
<dbReference type="Pfam" id="PF00132">
    <property type="entry name" value="Hexapep"/>
    <property type="match status" value="1"/>
</dbReference>
<dbReference type="Pfam" id="PF12804">
    <property type="entry name" value="NTP_transf_3"/>
    <property type="match status" value="1"/>
</dbReference>
<dbReference type="SUPFAM" id="SSF53448">
    <property type="entry name" value="Nucleotide-diphospho-sugar transferases"/>
    <property type="match status" value="1"/>
</dbReference>
<dbReference type="SUPFAM" id="SSF51161">
    <property type="entry name" value="Trimeric LpxA-like enzymes"/>
    <property type="match status" value="1"/>
</dbReference>
<proteinExistence type="inferred from homology"/>
<gene>
    <name evidence="1" type="primary">glmU</name>
    <name type="ordered locus">BAD_0871</name>
</gene>